<accession>P41757</accession>
<keyword id="KW-0067">ATP-binding</keyword>
<keyword id="KW-0963">Cytoplasm</keyword>
<keyword id="KW-0324">Glycolysis</keyword>
<keyword id="KW-0418">Kinase</keyword>
<keyword id="KW-0460">Magnesium</keyword>
<keyword id="KW-0479">Metal-binding</keyword>
<keyword id="KW-0496">Mitochondrion</keyword>
<keyword id="KW-0547">Nucleotide-binding</keyword>
<keyword id="KW-0808">Transferase</keyword>
<name>PGK_CANMA</name>
<reference key="1">
    <citation type="journal article" date="1994" name="Curr. Genet.">
        <title>Expression of an endogenous and a heterologous gene in Candida maltosa by using a promoter of a newly-isolated phosphoglycerate kinase (PGK) gene.</title>
        <authorList>
            <person name="Masuda Y."/>
            <person name="Park S.M."/>
            <person name="Ohkuma M."/>
            <person name="Ohta A."/>
            <person name="Takagi M."/>
        </authorList>
    </citation>
    <scope>NUCLEOTIDE SEQUENCE [GENOMIC DNA]</scope>
    <source>
        <strain>ATCC 28140 / CBS 5611 / IAM 12247 / JCM 1504 / NBRC 1977</strain>
    </source>
</reference>
<dbReference type="EC" id="2.7.2.3" evidence="4"/>
<dbReference type="EMBL" id="D12474">
    <property type="protein sequence ID" value="BAA02040.1"/>
    <property type="molecule type" value="Genomic_DNA"/>
</dbReference>
<dbReference type="PIR" id="S43525">
    <property type="entry name" value="JT0950"/>
</dbReference>
<dbReference type="SMR" id="P41757"/>
<dbReference type="UniPathway" id="UPA00109">
    <property type="reaction ID" value="UER00185"/>
</dbReference>
<dbReference type="GO" id="GO:0005829">
    <property type="term" value="C:cytosol"/>
    <property type="evidence" value="ECO:0007669"/>
    <property type="project" value="TreeGrafter"/>
</dbReference>
<dbReference type="GO" id="GO:0005739">
    <property type="term" value="C:mitochondrion"/>
    <property type="evidence" value="ECO:0007669"/>
    <property type="project" value="UniProtKB-SubCell"/>
</dbReference>
<dbReference type="GO" id="GO:0043531">
    <property type="term" value="F:ADP binding"/>
    <property type="evidence" value="ECO:0007669"/>
    <property type="project" value="TreeGrafter"/>
</dbReference>
<dbReference type="GO" id="GO:0005524">
    <property type="term" value="F:ATP binding"/>
    <property type="evidence" value="ECO:0007669"/>
    <property type="project" value="UniProtKB-KW"/>
</dbReference>
<dbReference type="GO" id="GO:0046872">
    <property type="term" value="F:metal ion binding"/>
    <property type="evidence" value="ECO:0007669"/>
    <property type="project" value="UniProtKB-KW"/>
</dbReference>
<dbReference type="GO" id="GO:0004618">
    <property type="term" value="F:phosphoglycerate kinase activity"/>
    <property type="evidence" value="ECO:0007669"/>
    <property type="project" value="UniProtKB-EC"/>
</dbReference>
<dbReference type="GO" id="GO:0006094">
    <property type="term" value="P:gluconeogenesis"/>
    <property type="evidence" value="ECO:0007669"/>
    <property type="project" value="TreeGrafter"/>
</dbReference>
<dbReference type="GO" id="GO:0006096">
    <property type="term" value="P:glycolytic process"/>
    <property type="evidence" value="ECO:0007669"/>
    <property type="project" value="UniProtKB-UniPathway"/>
</dbReference>
<dbReference type="CDD" id="cd00318">
    <property type="entry name" value="Phosphoglycerate_kinase"/>
    <property type="match status" value="1"/>
</dbReference>
<dbReference type="FunFam" id="3.40.50.1260:FF:000019">
    <property type="entry name" value="Phosphoglycerate kinase 1"/>
    <property type="match status" value="1"/>
</dbReference>
<dbReference type="FunFam" id="3.40.50.1260:FF:000031">
    <property type="entry name" value="Phosphoglycerate kinase 1"/>
    <property type="match status" value="1"/>
</dbReference>
<dbReference type="Gene3D" id="3.40.50.1260">
    <property type="entry name" value="Phosphoglycerate kinase, N-terminal domain"/>
    <property type="match status" value="3"/>
</dbReference>
<dbReference type="HAMAP" id="MF_00145">
    <property type="entry name" value="Phosphoglyc_kinase"/>
    <property type="match status" value="1"/>
</dbReference>
<dbReference type="InterPro" id="IPR001576">
    <property type="entry name" value="Phosphoglycerate_kinase"/>
</dbReference>
<dbReference type="InterPro" id="IPR015911">
    <property type="entry name" value="Phosphoglycerate_kinase_CS"/>
</dbReference>
<dbReference type="InterPro" id="IPR015824">
    <property type="entry name" value="Phosphoglycerate_kinase_N"/>
</dbReference>
<dbReference type="InterPro" id="IPR036043">
    <property type="entry name" value="Phosphoglycerate_kinase_sf"/>
</dbReference>
<dbReference type="PANTHER" id="PTHR11406">
    <property type="entry name" value="PHOSPHOGLYCERATE KINASE"/>
    <property type="match status" value="1"/>
</dbReference>
<dbReference type="PANTHER" id="PTHR11406:SF0">
    <property type="entry name" value="PHOSPHOGLYCERATE KINASE"/>
    <property type="match status" value="1"/>
</dbReference>
<dbReference type="Pfam" id="PF00162">
    <property type="entry name" value="PGK"/>
    <property type="match status" value="1"/>
</dbReference>
<dbReference type="PIRSF" id="PIRSF000724">
    <property type="entry name" value="Pgk"/>
    <property type="match status" value="1"/>
</dbReference>
<dbReference type="PRINTS" id="PR00477">
    <property type="entry name" value="PHGLYCKINASE"/>
</dbReference>
<dbReference type="SUPFAM" id="SSF53748">
    <property type="entry name" value="Phosphoglycerate kinase"/>
    <property type="match status" value="1"/>
</dbReference>
<dbReference type="PROSITE" id="PS00111">
    <property type="entry name" value="PGLYCERATE_KINASE"/>
    <property type="match status" value="1"/>
</dbReference>
<protein>
    <recommendedName>
        <fullName>Phosphoglycerate kinase</fullName>
        <ecNumber evidence="4">2.7.2.3</ecNumber>
    </recommendedName>
</protein>
<organism>
    <name type="scientific">Candida maltosa</name>
    <name type="common">Yeast</name>
    <dbReference type="NCBI Taxonomy" id="5479"/>
    <lineage>
        <taxon>Eukaryota</taxon>
        <taxon>Fungi</taxon>
        <taxon>Dikarya</taxon>
        <taxon>Ascomycota</taxon>
        <taxon>Saccharomycotina</taxon>
        <taxon>Pichiomycetes</taxon>
        <taxon>Debaryomycetaceae</taxon>
        <taxon>Candida/Lodderomyces clade</taxon>
        <taxon>Candida</taxon>
    </lineage>
</organism>
<comment type="function">
    <text evidence="2 3 4">Catalyzes one of the two ATP producing reactions in the glycolytic pathway via the reversible conversion of 1,3-diphosphoglycerate to 3-phosphoglycerate (By similarity). Both L- and D- forms of purine and pyrimidine nucleotides can be used as substrates, but the activity is much lower on pyrimidines (By similarity). Negatively regulates the biosynthesis of acetyl-CoA from pyruvate in the mitochondrion (By similarity).</text>
</comment>
<comment type="catalytic activity">
    <reaction evidence="4">
        <text>(2R)-3-phosphoglycerate + ATP = (2R)-3-phospho-glyceroyl phosphate + ADP</text>
        <dbReference type="Rhea" id="RHEA:14801"/>
        <dbReference type="ChEBI" id="CHEBI:30616"/>
        <dbReference type="ChEBI" id="CHEBI:57604"/>
        <dbReference type="ChEBI" id="CHEBI:58272"/>
        <dbReference type="ChEBI" id="CHEBI:456216"/>
        <dbReference type="EC" id="2.7.2.3"/>
    </reaction>
</comment>
<comment type="cofactor">
    <cofactor evidence="3">
        <name>Mg(2+)</name>
        <dbReference type="ChEBI" id="CHEBI:18420"/>
    </cofactor>
</comment>
<comment type="pathway">
    <text evidence="4">Carbohydrate degradation; glycolysis; pyruvate from D-glyceraldehyde 3-phosphate: step 2/5.</text>
</comment>
<comment type="subunit">
    <text evidence="1">Monomer.</text>
</comment>
<comment type="subcellular location">
    <subcellularLocation>
        <location evidence="4">Cytoplasm</location>
    </subcellularLocation>
    <subcellularLocation>
        <location evidence="4">Mitochondrion</location>
    </subcellularLocation>
</comment>
<comment type="similarity">
    <text evidence="6">Belongs to the phosphoglycerate kinase family.</text>
</comment>
<feature type="chain" id="PRO_0000145878" description="Phosphoglycerate kinase">
    <location>
        <begin position="1"/>
        <end position="417"/>
    </location>
</feature>
<feature type="binding site" evidence="3">
    <location>
        <position position="23"/>
    </location>
    <ligand>
        <name>(2R)-3-phosphoglycerate</name>
        <dbReference type="ChEBI" id="CHEBI:58272"/>
    </ligand>
</feature>
<feature type="binding site" evidence="5">
    <location>
        <position position="24"/>
    </location>
    <ligand>
        <name>(2R)-3-phosphoglycerate</name>
        <dbReference type="ChEBI" id="CHEBI:58272"/>
    </ligand>
</feature>
<feature type="binding site" evidence="3">
    <location>
        <position position="25"/>
    </location>
    <ligand>
        <name>(2R)-3-phosphoglycerate</name>
        <dbReference type="ChEBI" id="CHEBI:58272"/>
    </ligand>
</feature>
<feature type="binding site" evidence="5">
    <location>
        <position position="26"/>
    </location>
    <ligand>
        <name>(2R)-3-phosphoglycerate</name>
        <dbReference type="ChEBI" id="CHEBI:58272"/>
    </ligand>
</feature>
<feature type="binding site" evidence="3">
    <location>
        <position position="38"/>
    </location>
    <ligand>
        <name>(2R)-3-phosphoglycerate</name>
        <dbReference type="ChEBI" id="CHEBI:58272"/>
    </ligand>
</feature>
<feature type="binding site" evidence="5">
    <location>
        <position position="39"/>
    </location>
    <ligand>
        <name>(2R)-3-phosphoglycerate</name>
        <dbReference type="ChEBI" id="CHEBI:58272"/>
    </ligand>
</feature>
<feature type="binding site" evidence="3">
    <location>
        <position position="62"/>
    </location>
    <ligand>
        <name>(2R)-3-phosphoglycerate</name>
        <dbReference type="ChEBI" id="CHEBI:58272"/>
    </ligand>
</feature>
<feature type="binding site" evidence="5">
    <location>
        <position position="63"/>
    </location>
    <ligand>
        <name>(2R)-3-phosphoglycerate</name>
        <dbReference type="ChEBI" id="CHEBI:58272"/>
    </ligand>
</feature>
<feature type="binding site" evidence="3">
    <location>
        <position position="65"/>
    </location>
    <ligand>
        <name>(2R)-3-phosphoglycerate</name>
        <dbReference type="ChEBI" id="CHEBI:58272"/>
    </ligand>
</feature>
<feature type="binding site" evidence="5">
    <location>
        <position position="66"/>
    </location>
    <ligand>
        <name>(2R)-3-phosphoglycerate</name>
        <dbReference type="ChEBI" id="CHEBI:58272"/>
    </ligand>
</feature>
<feature type="binding site" evidence="3">
    <location>
        <position position="121"/>
    </location>
    <ligand>
        <name>(2R)-3-phosphoglycerate</name>
        <dbReference type="ChEBI" id="CHEBI:58272"/>
    </ligand>
</feature>
<feature type="binding site" evidence="5">
    <location>
        <position position="122"/>
    </location>
    <ligand>
        <name>(2R)-3-phosphoglycerate</name>
        <dbReference type="ChEBI" id="CHEBI:58272"/>
    </ligand>
</feature>
<feature type="binding site" evidence="3">
    <location>
        <position position="169"/>
    </location>
    <ligand>
        <name>(2R)-3-phosphoglycerate</name>
        <dbReference type="ChEBI" id="CHEBI:58272"/>
    </ligand>
</feature>
<feature type="binding site" evidence="5">
    <location>
        <position position="170"/>
    </location>
    <ligand>
        <name>(2R)-3-phosphoglycerate</name>
        <dbReference type="ChEBI" id="CHEBI:58272"/>
    </ligand>
</feature>
<feature type="binding site" evidence="3">
    <location>
        <position position="213"/>
    </location>
    <ligand>
        <name>ADP</name>
        <dbReference type="ChEBI" id="CHEBI:456216"/>
    </ligand>
</feature>
<feature type="binding site" evidence="3">
    <location>
        <position position="213"/>
    </location>
    <ligand>
        <name>CDP</name>
        <dbReference type="ChEBI" id="CHEBI:58069"/>
    </ligand>
</feature>
<feature type="binding site" evidence="5">
    <location>
        <position position="214"/>
    </location>
    <ligand>
        <name>AMP</name>
        <dbReference type="ChEBI" id="CHEBI:456215"/>
    </ligand>
</feature>
<feature type="binding site" evidence="5">
    <location>
        <position position="214"/>
    </location>
    <ligand>
        <name>ATP</name>
        <dbReference type="ChEBI" id="CHEBI:30616"/>
    </ligand>
</feature>
<feature type="binding site" evidence="3">
    <location>
        <position position="214"/>
    </location>
    <ligand>
        <name>Mg(2+)</name>
        <dbReference type="ChEBI" id="CHEBI:18420"/>
    </ligand>
</feature>
<feature type="binding site" evidence="5">
    <location>
        <position position="215"/>
    </location>
    <ligand>
        <name>AMP</name>
        <dbReference type="ChEBI" id="CHEBI:456215"/>
    </ligand>
</feature>
<feature type="binding site" evidence="3">
    <location>
        <position position="218"/>
    </location>
    <ligand>
        <name>CDP</name>
        <dbReference type="ChEBI" id="CHEBI:58069"/>
    </ligand>
</feature>
<feature type="binding site" evidence="3">
    <location>
        <position position="218"/>
    </location>
    <ligand>
        <name>Mg(2+)</name>
        <dbReference type="ChEBI" id="CHEBI:18420"/>
    </ligand>
</feature>
<feature type="binding site" evidence="5">
    <location>
        <position position="219"/>
    </location>
    <ligand>
        <name>AMP</name>
        <dbReference type="ChEBI" id="CHEBI:456215"/>
    </ligand>
</feature>
<feature type="binding site" evidence="5">
    <location>
        <position position="219"/>
    </location>
    <ligand>
        <name>ATP</name>
        <dbReference type="ChEBI" id="CHEBI:30616"/>
    </ligand>
</feature>
<feature type="binding site" evidence="3">
    <location>
        <position position="237"/>
    </location>
    <ligand>
        <name>ADP</name>
        <dbReference type="ChEBI" id="CHEBI:456216"/>
    </ligand>
</feature>
<feature type="binding site" evidence="3">
    <location>
        <position position="237"/>
    </location>
    <ligand>
        <name>CDP</name>
        <dbReference type="ChEBI" id="CHEBI:58069"/>
    </ligand>
</feature>
<feature type="binding site" evidence="5">
    <location>
        <position position="238"/>
    </location>
    <ligand>
        <name>AMP</name>
        <dbReference type="ChEBI" id="CHEBI:456215"/>
    </ligand>
</feature>
<feature type="binding site" evidence="5">
    <location>
        <position position="238"/>
    </location>
    <ligand>
        <name>ATP</name>
        <dbReference type="ChEBI" id="CHEBI:30616"/>
    </ligand>
</feature>
<feature type="binding site" evidence="5">
    <location>
        <position position="312"/>
    </location>
    <ligand>
        <name>AMP</name>
        <dbReference type="ChEBI" id="CHEBI:456215"/>
    </ligand>
</feature>
<feature type="binding site" evidence="5">
    <location>
        <position position="312"/>
    </location>
    <ligand>
        <name>ATP</name>
        <dbReference type="ChEBI" id="CHEBI:30616"/>
    </ligand>
</feature>
<feature type="binding site" evidence="3">
    <location>
        <position position="337"/>
    </location>
    <ligand>
        <name>CDP</name>
        <dbReference type="ChEBI" id="CHEBI:58069"/>
    </ligand>
</feature>
<feature type="binding site" evidence="3">
    <location>
        <position position="342"/>
    </location>
    <ligand>
        <name>ADP</name>
        <dbReference type="ChEBI" id="CHEBI:456216"/>
    </ligand>
</feature>
<feature type="binding site" evidence="3">
    <location>
        <position position="342"/>
    </location>
    <ligand>
        <name>CDP</name>
        <dbReference type="ChEBI" id="CHEBI:58069"/>
    </ligand>
</feature>
<feature type="binding site" evidence="5">
    <location>
        <position position="343"/>
    </location>
    <ligand>
        <name>AMP</name>
        <dbReference type="ChEBI" id="CHEBI:456215"/>
    </ligand>
</feature>
<feature type="binding site" evidence="5">
    <location>
        <position position="343"/>
    </location>
    <ligand>
        <name>ATP</name>
        <dbReference type="ChEBI" id="CHEBI:30616"/>
    </ligand>
</feature>
<feature type="binding site" evidence="5">
    <location>
        <position position="374"/>
    </location>
    <ligand>
        <name>ATP</name>
        <dbReference type="ChEBI" id="CHEBI:30616"/>
    </ligand>
</feature>
<feature type="binding site" evidence="5">
    <location>
        <position position="374"/>
    </location>
    <ligand>
        <name>Mg(2+)</name>
        <dbReference type="ChEBI" id="CHEBI:18420"/>
    </ligand>
</feature>
<feature type="binding site" evidence="5">
    <location>
        <position position="375"/>
    </location>
    <ligand>
        <name>ATP</name>
        <dbReference type="ChEBI" id="CHEBI:30616"/>
    </ligand>
</feature>
<sequence length="417" mass="44947">MSLSNKLSVKDLNVTGKRVFIRVDFNVPLDGKTITNNQRIVAALPTIKYVEEQKPKCIILASHLGRPNGERNEKYSLAPVAAELEKLLGQKVTFLDDCVGPEVTKAVDSATEGQIFLLENLRFHIEEEGSAKDKDGKKTKADPEAVKKFREQLTSLADVYVNDAFGTAHRAHSSMVGLEVPERAAGFLMSKELEYFAKALENPQRPFLAILGGAKVSDKIQLIDNLLDKVDMLIVGGGMAFTFKKVLNNMPIGDSLFDEAGAKNVENLVAKAKKNNVELILPVDFVTADKFDKDAEVSTADDVTGIPDKWMGLDCGPKSRKLFADAVAKAKTIVWNGPPGVFEFDKFAEGTKSLLDDAVKSAEVGNIVIIGGGDTATVAKKYGVVDKLSHVSTGGGASLELLEGKELPGVTALSNKA</sequence>
<gene>
    <name type="primary">PGK1</name>
</gene>
<evidence type="ECO:0000250" key="1"/>
<evidence type="ECO:0000250" key="2">
    <source>
        <dbReference type="UniProtKB" id="A0A7G5KET3"/>
    </source>
</evidence>
<evidence type="ECO:0000250" key="3">
    <source>
        <dbReference type="UniProtKB" id="P00558"/>
    </source>
</evidence>
<evidence type="ECO:0000250" key="4">
    <source>
        <dbReference type="UniProtKB" id="P00560"/>
    </source>
</evidence>
<evidence type="ECO:0000250" key="5">
    <source>
        <dbReference type="UniProtKB" id="Q7SIB7"/>
    </source>
</evidence>
<evidence type="ECO:0000305" key="6"/>
<proteinExistence type="inferred from homology"/>